<organism>
    <name type="scientific">Pyrococcus abyssi (strain GE5 / Orsay)</name>
    <dbReference type="NCBI Taxonomy" id="272844"/>
    <lineage>
        <taxon>Archaea</taxon>
        <taxon>Methanobacteriati</taxon>
        <taxon>Methanobacteriota</taxon>
        <taxon>Thermococci</taxon>
        <taxon>Thermococcales</taxon>
        <taxon>Thermococcaceae</taxon>
        <taxon>Pyrococcus</taxon>
    </lineage>
</organism>
<proteinExistence type="inferred from homology"/>
<dbReference type="EMBL" id="AJ248285">
    <property type="protein sequence ID" value="CAB49571.1"/>
    <property type="molecule type" value="Genomic_DNA"/>
</dbReference>
<dbReference type="EMBL" id="HE613800">
    <property type="protein sequence ID" value="CCE70043.1"/>
    <property type="molecule type" value="Genomic_DNA"/>
</dbReference>
<dbReference type="PIR" id="B75107">
    <property type="entry name" value="B75107"/>
</dbReference>
<dbReference type="RefSeq" id="WP_010867773.1">
    <property type="nucleotide sequence ID" value="NC_000868.1"/>
</dbReference>
<dbReference type="SMR" id="Q9V0Y1"/>
<dbReference type="STRING" id="272844.PAB1933"/>
<dbReference type="KEGG" id="pab:PAB1933"/>
<dbReference type="PATRIC" id="fig|272844.11.peg.689"/>
<dbReference type="eggNOG" id="arCOG01915">
    <property type="taxonomic scope" value="Archaea"/>
</dbReference>
<dbReference type="HOGENOM" id="CLU_024949_3_3_2"/>
<dbReference type="OrthoDB" id="10752at2157"/>
<dbReference type="PhylomeDB" id="Q9V0Y1"/>
<dbReference type="Proteomes" id="UP000000810">
    <property type="component" value="Chromosome"/>
</dbReference>
<dbReference type="Proteomes" id="UP000009139">
    <property type="component" value="Chromosome"/>
</dbReference>
<dbReference type="GO" id="GO:0005886">
    <property type="term" value="C:plasma membrane"/>
    <property type="evidence" value="ECO:0007669"/>
    <property type="project" value="InterPro"/>
</dbReference>
<dbReference type="CDD" id="cd08826">
    <property type="entry name" value="SPFH_eoslipins_u1"/>
    <property type="match status" value="1"/>
</dbReference>
<dbReference type="FunFam" id="3.30.479.30:FF:000004">
    <property type="entry name" value="Putative membrane protease family, stomatin"/>
    <property type="match status" value="1"/>
</dbReference>
<dbReference type="Gene3D" id="6.10.250.2090">
    <property type="match status" value="1"/>
</dbReference>
<dbReference type="Gene3D" id="3.30.479.30">
    <property type="entry name" value="Band 7 domain"/>
    <property type="match status" value="1"/>
</dbReference>
<dbReference type="InterPro" id="IPR043202">
    <property type="entry name" value="Band-7_stomatin-like"/>
</dbReference>
<dbReference type="InterPro" id="IPR001107">
    <property type="entry name" value="Band_7"/>
</dbReference>
<dbReference type="InterPro" id="IPR036013">
    <property type="entry name" value="Band_7/SPFH_dom_sf"/>
</dbReference>
<dbReference type="InterPro" id="IPR018080">
    <property type="entry name" value="Band_7/stomatin-like_CS"/>
</dbReference>
<dbReference type="InterPro" id="IPR001972">
    <property type="entry name" value="Stomatin_HflK_fam"/>
</dbReference>
<dbReference type="PANTHER" id="PTHR10264:SF19">
    <property type="entry name" value="AT06885P-RELATED"/>
    <property type="match status" value="1"/>
</dbReference>
<dbReference type="PANTHER" id="PTHR10264">
    <property type="entry name" value="BAND 7 PROTEIN-RELATED"/>
    <property type="match status" value="1"/>
</dbReference>
<dbReference type="Pfam" id="PF01145">
    <property type="entry name" value="Band_7"/>
    <property type="match status" value="1"/>
</dbReference>
<dbReference type="PRINTS" id="PR00721">
    <property type="entry name" value="STOMATIN"/>
</dbReference>
<dbReference type="SMART" id="SM00244">
    <property type="entry name" value="PHB"/>
    <property type="match status" value="1"/>
</dbReference>
<dbReference type="SUPFAM" id="SSF117892">
    <property type="entry name" value="Band 7/SPFH domain"/>
    <property type="match status" value="1"/>
</dbReference>
<dbReference type="PROSITE" id="PS01270">
    <property type="entry name" value="BAND_7"/>
    <property type="match status" value="1"/>
</dbReference>
<accession>Q9V0Y1</accession>
<accession>G8ZJB6</accession>
<comment type="subunit">
    <text evidence="1">Homotrimer.</text>
</comment>
<comment type="subcellular location">
    <subcellularLocation>
        <location evidence="3">Membrane</location>
        <topology evidence="3">Single-pass membrane protein</topology>
    </subcellularLocation>
</comment>
<comment type="similarity">
    <text evidence="3">Belongs to the band 7/mec-2 family.</text>
</comment>
<evidence type="ECO:0000250" key="1"/>
<evidence type="ECO:0000255" key="2"/>
<evidence type="ECO:0000305" key="3"/>
<sequence length="268" mass="30242">MILPTNFFVTTIILLFILIFLASAIKIVKEYERAVIFRLGRVVGARGPGLFFIIPIFEKAVIVDLRTQVLDVPVQETITKDNVPVRVNAVVYFRVVDPVKAVTQVKNYIMATSQISQTTLRSVIGQAHLDELLSERDKLNMQLQRIIDEATDPWGIKVTAVEIKDVELPAGMQRAMAKQAEAERERRARITLAEAERQAAEKLREAAEIISEHPMALQLRTLQTISDVASDKSNVIVLMLPMEMLKLFKSLSDAAQVYAKKEKEKEKE</sequence>
<keyword id="KW-0175">Coiled coil</keyword>
<keyword id="KW-0472">Membrane</keyword>
<keyword id="KW-0812">Transmembrane</keyword>
<keyword id="KW-1133">Transmembrane helix</keyword>
<protein>
    <recommendedName>
        <fullName>Stomatin homolog PYRAB06580</fullName>
    </recommendedName>
    <alternativeName>
        <fullName>Prokaryotic stomatin</fullName>
        <shortName>P-stomatin</shortName>
    </alternativeName>
</protein>
<gene>
    <name type="ordered locus">PYRAB06580</name>
    <name type="ORF">PAB1933</name>
</gene>
<reference key="1">
    <citation type="journal article" date="2003" name="Mol. Microbiol.">
        <title>An integrated analysis of the genome of the hyperthermophilic archaeon Pyrococcus abyssi.</title>
        <authorList>
            <person name="Cohen G.N."/>
            <person name="Barbe V."/>
            <person name="Flament D."/>
            <person name="Galperin M."/>
            <person name="Heilig R."/>
            <person name="Lecompte O."/>
            <person name="Poch O."/>
            <person name="Prieur D."/>
            <person name="Querellou J."/>
            <person name="Ripp R."/>
            <person name="Thierry J.-C."/>
            <person name="Van der Oost J."/>
            <person name="Weissenbach J."/>
            <person name="Zivanovic Y."/>
            <person name="Forterre P."/>
        </authorList>
    </citation>
    <scope>NUCLEOTIDE SEQUENCE [LARGE SCALE GENOMIC DNA]</scope>
    <source>
        <strain>GE5 / Orsay</strain>
    </source>
</reference>
<reference key="2">
    <citation type="journal article" date="2012" name="Curr. Microbiol.">
        <title>Re-annotation of two hyperthermophilic archaea Pyrococcus abyssi GE5 and Pyrococcus furiosus DSM 3638.</title>
        <authorList>
            <person name="Gao J."/>
            <person name="Wang J."/>
        </authorList>
    </citation>
    <scope>GENOME REANNOTATION</scope>
    <source>
        <strain>GE5 / Orsay</strain>
    </source>
</reference>
<name>PSTOM_PYRAB</name>
<feature type="chain" id="PRO_0000094066" description="Stomatin homolog PYRAB06580">
    <location>
        <begin position="1"/>
        <end position="268"/>
    </location>
</feature>
<feature type="transmembrane region" description="Helical" evidence="2">
    <location>
        <begin position="1"/>
        <end position="21"/>
    </location>
</feature>
<feature type="coiled-coil region" evidence="2">
    <location>
        <begin position="125"/>
        <end position="152"/>
    </location>
</feature>
<feature type="coiled-coil region" evidence="2">
    <location>
        <begin position="178"/>
        <end position="213"/>
    </location>
</feature>